<comment type="function">
    <text evidence="1">Is required not only for elongation of protein synthesis but also for the initiation of all mRNA translation through initiator tRNA(fMet) aminoacylation.</text>
</comment>
<comment type="catalytic activity">
    <reaction evidence="1">
        <text>tRNA(Met) + L-methionine + ATP = L-methionyl-tRNA(Met) + AMP + diphosphate</text>
        <dbReference type="Rhea" id="RHEA:13481"/>
        <dbReference type="Rhea" id="RHEA-COMP:9667"/>
        <dbReference type="Rhea" id="RHEA-COMP:9698"/>
        <dbReference type="ChEBI" id="CHEBI:30616"/>
        <dbReference type="ChEBI" id="CHEBI:33019"/>
        <dbReference type="ChEBI" id="CHEBI:57844"/>
        <dbReference type="ChEBI" id="CHEBI:78442"/>
        <dbReference type="ChEBI" id="CHEBI:78530"/>
        <dbReference type="ChEBI" id="CHEBI:456215"/>
        <dbReference type="EC" id="6.1.1.10"/>
    </reaction>
</comment>
<comment type="cofactor">
    <cofactor evidence="1">
        <name>Zn(2+)</name>
        <dbReference type="ChEBI" id="CHEBI:29105"/>
    </cofactor>
    <text evidence="1">Binds 1 zinc ion per subunit.</text>
</comment>
<comment type="subunit">
    <text evidence="1">Homodimer.</text>
</comment>
<comment type="subcellular location">
    <subcellularLocation>
        <location evidence="1">Cytoplasm</location>
    </subcellularLocation>
</comment>
<comment type="similarity">
    <text evidence="1">Belongs to the class-I aminoacyl-tRNA synthetase family. MetG type 1 subfamily.</text>
</comment>
<proteinExistence type="inferred from homology"/>
<reference key="1">
    <citation type="submission" date="2005-08" db="EMBL/GenBank/DDBJ databases">
        <title>Complete sequence of Chlorobium chlorochromatii CaD3.</title>
        <authorList>
            <consortium name="US DOE Joint Genome Institute"/>
            <person name="Copeland A."/>
            <person name="Lucas S."/>
            <person name="Lapidus A."/>
            <person name="Barry K."/>
            <person name="Detter J.C."/>
            <person name="Glavina T."/>
            <person name="Hammon N."/>
            <person name="Israni S."/>
            <person name="Pitluck S."/>
            <person name="Bryant D."/>
            <person name="Schmutz J."/>
            <person name="Larimer F."/>
            <person name="Land M."/>
            <person name="Kyrpides N."/>
            <person name="Ivanova N."/>
            <person name="Richardson P."/>
        </authorList>
    </citation>
    <scope>NUCLEOTIDE SEQUENCE [LARGE SCALE GENOMIC DNA]</scope>
    <source>
        <strain>CaD3</strain>
    </source>
</reference>
<organism>
    <name type="scientific">Chlorobium chlorochromatii (strain CaD3)</name>
    <dbReference type="NCBI Taxonomy" id="340177"/>
    <lineage>
        <taxon>Bacteria</taxon>
        <taxon>Pseudomonadati</taxon>
        <taxon>Chlorobiota</taxon>
        <taxon>Chlorobiia</taxon>
        <taxon>Chlorobiales</taxon>
        <taxon>Chlorobiaceae</taxon>
        <taxon>Chlorobium/Pelodictyon group</taxon>
        <taxon>Chlorobium</taxon>
    </lineage>
</organism>
<dbReference type="EC" id="6.1.1.10" evidence="1"/>
<dbReference type="EMBL" id="CP000108">
    <property type="protein sequence ID" value="ABB28661.1"/>
    <property type="molecule type" value="Genomic_DNA"/>
</dbReference>
<dbReference type="SMR" id="Q3AQR4"/>
<dbReference type="STRING" id="340177.Cag_1403"/>
<dbReference type="KEGG" id="cch:Cag_1403"/>
<dbReference type="eggNOG" id="COG0073">
    <property type="taxonomic scope" value="Bacteria"/>
</dbReference>
<dbReference type="eggNOG" id="COG0143">
    <property type="taxonomic scope" value="Bacteria"/>
</dbReference>
<dbReference type="HOGENOM" id="CLU_009710_1_2_10"/>
<dbReference type="GO" id="GO:0005829">
    <property type="term" value="C:cytosol"/>
    <property type="evidence" value="ECO:0007669"/>
    <property type="project" value="TreeGrafter"/>
</dbReference>
<dbReference type="GO" id="GO:0005524">
    <property type="term" value="F:ATP binding"/>
    <property type="evidence" value="ECO:0007669"/>
    <property type="project" value="UniProtKB-UniRule"/>
</dbReference>
<dbReference type="GO" id="GO:0046872">
    <property type="term" value="F:metal ion binding"/>
    <property type="evidence" value="ECO:0007669"/>
    <property type="project" value="UniProtKB-KW"/>
</dbReference>
<dbReference type="GO" id="GO:0004825">
    <property type="term" value="F:methionine-tRNA ligase activity"/>
    <property type="evidence" value="ECO:0007669"/>
    <property type="project" value="UniProtKB-UniRule"/>
</dbReference>
<dbReference type="GO" id="GO:0000049">
    <property type="term" value="F:tRNA binding"/>
    <property type="evidence" value="ECO:0007669"/>
    <property type="project" value="UniProtKB-KW"/>
</dbReference>
<dbReference type="GO" id="GO:0006431">
    <property type="term" value="P:methionyl-tRNA aminoacylation"/>
    <property type="evidence" value="ECO:0007669"/>
    <property type="project" value="UniProtKB-UniRule"/>
</dbReference>
<dbReference type="CDD" id="cd07957">
    <property type="entry name" value="Anticodon_Ia_Met"/>
    <property type="match status" value="1"/>
</dbReference>
<dbReference type="CDD" id="cd00814">
    <property type="entry name" value="MetRS_core"/>
    <property type="match status" value="1"/>
</dbReference>
<dbReference type="CDD" id="cd02800">
    <property type="entry name" value="tRNA_bind_EcMetRS_like"/>
    <property type="match status" value="1"/>
</dbReference>
<dbReference type="FunFam" id="2.20.28.20:FF:000001">
    <property type="entry name" value="Methionine--tRNA ligase"/>
    <property type="match status" value="1"/>
</dbReference>
<dbReference type="FunFam" id="2.40.50.140:FF:000042">
    <property type="entry name" value="Methionine--tRNA ligase"/>
    <property type="match status" value="1"/>
</dbReference>
<dbReference type="Gene3D" id="3.40.50.620">
    <property type="entry name" value="HUPs"/>
    <property type="match status" value="1"/>
</dbReference>
<dbReference type="Gene3D" id="1.10.730.10">
    <property type="entry name" value="Isoleucyl-tRNA Synthetase, Domain 1"/>
    <property type="match status" value="1"/>
</dbReference>
<dbReference type="Gene3D" id="2.20.28.20">
    <property type="entry name" value="Methionyl-tRNA synthetase, Zn-domain"/>
    <property type="match status" value="1"/>
</dbReference>
<dbReference type="Gene3D" id="2.40.50.140">
    <property type="entry name" value="Nucleic acid-binding proteins"/>
    <property type="match status" value="1"/>
</dbReference>
<dbReference type="HAMAP" id="MF_00098">
    <property type="entry name" value="Met_tRNA_synth_type1"/>
    <property type="match status" value="1"/>
</dbReference>
<dbReference type="InterPro" id="IPR001412">
    <property type="entry name" value="aa-tRNA-synth_I_CS"/>
</dbReference>
<dbReference type="InterPro" id="IPR041872">
    <property type="entry name" value="Anticodon_Met"/>
</dbReference>
<dbReference type="InterPro" id="IPR004495">
    <property type="entry name" value="Met-tRNA-synth_bsu_C"/>
</dbReference>
<dbReference type="InterPro" id="IPR023458">
    <property type="entry name" value="Met-tRNA_ligase_1"/>
</dbReference>
<dbReference type="InterPro" id="IPR014758">
    <property type="entry name" value="Met-tRNA_synth"/>
</dbReference>
<dbReference type="InterPro" id="IPR015413">
    <property type="entry name" value="Methionyl/Leucyl_tRNA_Synth"/>
</dbReference>
<dbReference type="InterPro" id="IPR033911">
    <property type="entry name" value="MetRS_core"/>
</dbReference>
<dbReference type="InterPro" id="IPR029038">
    <property type="entry name" value="MetRS_Zn"/>
</dbReference>
<dbReference type="InterPro" id="IPR012340">
    <property type="entry name" value="NA-bd_OB-fold"/>
</dbReference>
<dbReference type="InterPro" id="IPR014729">
    <property type="entry name" value="Rossmann-like_a/b/a_fold"/>
</dbReference>
<dbReference type="InterPro" id="IPR002547">
    <property type="entry name" value="tRNA-bd_dom"/>
</dbReference>
<dbReference type="InterPro" id="IPR009080">
    <property type="entry name" value="tRNAsynth_Ia_anticodon-bd"/>
</dbReference>
<dbReference type="NCBIfam" id="TIGR00398">
    <property type="entry name" value="metG"/>
    <property type="match status" value="1"/>
</dbReference>
<dbReference type="NCBIfam" id="TIGR00399">
    <property type="entry name" value="metG_C_term"/>
    <property type="match status" value="1"/>
</dbReference>
<dbReference type="NCBIfam" id="NF001100">
    <property type="entry name" value="PRK00133.1"/>
    <property type="match status" value="1"/>
</dbReference>
<dbReference type="PANTHER" id="PTHR45765">
    <property type="entry name" value="METHIONINE--TRNA LIGASE"/>
    <property type="match status" value="1"/>
</dbReference>
<dbReference type="PANTHER" id="PTHR45765:SF1">
    <property type="entry name" value="METHIONINE--TRNA LIGASE, CYTOPLASMIC"/>
    <property type="match status" value="1"/>
</dbReference>
<dbReference type="Pfam" id="PF19303">
    <property type="entry name" value="Anticodon_3"/>
    <property type="match status" value="1"/>
</dbReference>
<dbReference type="Pfam" id="PF09334">
    <property type="entry name" value="tRNA-synt_1g"/>
    <property type="match status" value="1"/>
</dbReference>
<dbReference type="Pfam" id="PF01588">
    <property type="entry name" value="tRNA_bind"/>
    <property type="match status" value="1"/>
</dbReference>
<dbReference type="PRINTS" id="PR01041">
    <property type="entry name" value="TRNASYNTHMET"/>
</dbReference>
<dbReference type="SUPFAM" id="SSF47323">
    <property type="entry name" value="Anticodon-binding domain of a subclass of class I aminoacyl-tRNA synthetases"/>
    <property type="match status" value="1"/>
</dbReference>
<dbReference type="SUPFAM" id="SSF57770">
    <property type="entry name" value="Methionyl-tRNA synthetase (MetRS), Zn-domain"/>
    <property type="match status" value="1"/>
</dbReference>
<dbReference type="SUPFAM" id="SSF50249">
    <property type="entry name" value="Nucleic acid-binding proteins"/>
    <property type="match status" value="1"/>
</dbReference>
<dbReference type="SUPFAM" id="SSF52374">
    <property type="entry name" value="Nucleotidylyl transferase"/>
    <property type="match status" value="1"/>
</dbReference>
<dbReference type="PROSITE" id="PS00178">
    <property type="entry name" value="AA_TRNA_LIGASE_I"/>
    <property type="match status" value="1"/>
</dbReference>
<dbReference type="PROSITE" id="PS50886">
    <property type="entry name" value="TRBD"/>
    <property type="match status" value="1"/>
</dbReference>
<protein>
    <recommendedName>
        <fullName evidence="1">Methionine--tRNA ligase</fullName>
        <ecNumber evidence="1">6.1.1.10</ecNumber>
    </recommendedName>
    <alternativeName>
        <fullName evidence="1">Methionyl-tRNA synthetase</fullName>
        <shortName evidence="1">MetRS</shortName>
    </alternativeName>
</protein>
<feature type="chain" id="PRO_0000331801" description="Methionine--tRNA ligase">
    <location>
        <begin position="1"/>
        <end position="705"/>
    </location>
</feature>
<feature type="domain" description="tRNA-binding" evidence="1">
    <location>
        <begin position="604"/>
        <end position="705"/>
    </location>
</feature>
<feature type="short sequence motif" description="'HIGH' region">
    <location>
        <begin position="17"/>
        <end position="27"/>
    </location>
</feature>
<feature type="short sequence motif" description="'KMSKS' region">
    <location>
        <begin position="347"/>
        <end position="351"/>
    </location>
</feature>
<feature type="binding site" evidence="1">
    <location>
        <position position="149"/>
    </location>
    <ligand>
        <name>Zn(2+)</name>
        <dbReference type="ChEBI" id="CHEBI:29105"/>
    </ligand>
</feature>
<feature type="binding site" evidence="1">
    <location>
        <position position="152"/>
    </location>
    <ligand>
        <name>Zn(2+)</name>
        <dbReference type="ChEBI" id="CHEBI:29105"/>
    </ligand>
</feature>
<feature type="binding site" evidence="1">
    <location>
        <position position="162"/>
    </location>
    <ligand>
        <name>Zn(2+)</name>
        <dbReference type="ChEBI" id="CHEBI:29105"/>
    </ligand>
</feature>
<feature type="binding site" evidence="1">
    <location>
        <position position="165"/>
    </location>
    <ligand>
        <name>Zn(2+)</name>
        <dbReference type="ChEBI" id="CHEBI:29105"/>
    </ligand>
</feature>
<feature type="binding site" evidence="1">
    <location>
        <position position="350"/>
    </location>
    <ligand>
        <name>ATP</name>
        <dbReference type="ChEBI" id="CHEBI:30616"/>
    </ligand>
</feature>
<sequence length="705" mass="79257">MSTMPHFSRTLVTTALPYANGPVHLGHLAGVYLPADLYVRYKRLKGEDIIHIGGSDEHGVPITISAEKEGISPRDVVDRYHAMNLDAFTRCGISFDYYGRTSSAVHHATAQEFFSDIEQKGIFQQKTEKLFFDLQAGRFLSDRYVTGTCPVCNNPEANGDQCEQCGTHLSPLELLNPKSKLSDATPELRETLHWYFPLGRFQAALEEYVNSHEGEWRPNVVNYTRTWFKQGLNDRAITRDLDWGVAVPLQSAEAVGKVLYVWFDAVLGYISFTKEWAALQGNAELWKTYWQDPETRLIHFIGKDNVVFHTLMFPSILMAWNEGKTTDCYNLADNVPASEFMNFEGRKFSKSRNYAVYLGEFLDKFPADTLRYSIAMNYPESKDTDFSWQDFQNRTNGELADTLGNFIKRSIDFTNTRFEGVVPASVTKEEWDNLGIDWQATLEQLDSAYEGFHFRDAATLGMEIARAANRYLTSSEPWKVIKVDREAAATTMALSLNLCHALSIALYPVIPETCNRIRAMLGFSEPLEATIQRGTSLLSSLLTPTLQQGHKLREHSEILFTKIEDSAIAPELEKIAKLIAEAEKREAALAESRIEFKPAISFDEFQKVDLRVATVVAAEPVAKANKLLKLRVQVGSLTRQVLAGIAKHYTPEEMVGKQVLLVANLEERTIRGELSQGMILAVENSDGKLFIVQPSGEGINGQSVQ</sequence>
<evidence type="ECO:0000255" key="1">
    <source>
        <dbReference type="HAMAP-Rule" id="MF_00098"/>
    </source>
</evidence>
<gene>
    <name evidence="1" type="primary">metG</name>
    <name type="ordered locus">Cag_1403</name>
</gene>
<accession>Q3AQR4</accession>
<keyword id="KW-0030">Aminoacyl-tRNA synthetase</keyword>
<keyword id="KW-0067">ATP-binding</keyword>
<keyword id="KW-0963">Cytoplasm</keyword>
<keyword id="KW-0436">Ligase</keyword>
<keyword id="KW-0479">Metal-binding</keyword>
<keyword id="KW-0547">Nucleotide-binding</keyword>
<keyword id="KW-0648">Protein biosynthesis</keyword>
<keyword id="KW-0694">RNA-binding</keyword>
<keyword id="KW-0820">tRNA-binding</keyword>
<keyword id="KW-0862">Zinc</keyword>
<name>SYM_CHLCH</name>